<accession>A0LXJ9</accession>
<sequence length="532" mass="59394">MVDNTQITKTISLEDYGIKNATVHYQLSPEELHNKTIKLGQGVESSSGALAVNTGEFTGRSPKDRFIVKDEVTKDKVWWGDINIPFDTKKFDSLYNKVAEYLGDKDVYARDAYACADEKYRLNIRVLNEYPWSNLFAFNMFLRPENQELDNFKEDWLVLNAPGFKANPEVDGTRQENFAILNFSKKIALIGGTGYTGEIKKGIFSALNFVLPVYENTLPMHCSANVGEDGDTAIFFGLSGTGKTTLSADPERKLIGDDEHGWTKENTIFNFEGGCYAKVINLSEENEPDIYKAIKPGAILENVALDANGDVDFEDVTITQNTRVSYPINHINNIQKPSTGENPKNIFFLTADAFGVLPPISKLTPGQAAYHFISGYTAKVAGTEAGVDEPVPSFSACFGAPFMPLHPTEYAEMLSKKMKAADVNVWLVNTGWTGGPYGVGSRMKLKYTREMISSALEGKLENVDYEKHNIFGLEMPKTCEGVPSEVLNPRNTWKDQNAYDLKAKELSNFFRKNFRKFEEYANEEIMNGAPVE</sequence>
<gene>
    <name evidence="1" type="primary">pckA</name>
    <name type="ordered locus">GFO_0105</name>
</gene>
<keyword id="KW-0067">ATP-binding</keyword>
<keyword id="KW-0963">Cytoplasm</keyword>
<keyword id="KW-0210">Decarboxylase</keyword>
<keyword id="KW-0312">Gluconeogenesis</keyword>
<keyword id="KW-0456">Lyase</keyword>
<keyword id="KW-0464">Manganese</keyword>
<keyword id="KW-0479">Metal-binding</keyword>
<keyword id="KW-0547">Nucleotide-binding</keyword>
<feature type="chain" id="PRO_1000192317" description="Phosphoenolpyruvate carboxykinase (ATP)">
    <location>
        <begin position="1"/>
        <end position="532"/>
    </location>
</feature>
<feature type="binding site" evidence="1">
    <location>
        <position position="60"/>
    </location>
    <ligand>
        <name>substrate</name>
    </ligand>
</feature>
<feature type="binding site" evidence="1">
    <location>
        <position position="195"/>
    </location>
    <ligand>
        <name>substrate</name>
    </ligand>
</feature>
<feature type="binding site" evidence="1">
    <location>
        <position position="201"/>
    </location>
    <ligand>
        <name>ATP</name>
        <dbReference type="ChEBI" id="CHEBI:30616"/>
    </ligand>
</feature>
<feature type="binding site" evidence="1">
    <location>
        <position position="201"/>
    </location>
    <ligand>
        <name>Mn(2+)</name>
        <dbReference type="ChEBI" id="CHEBI:29035"/>
    </ligand>
</feature>
<feature type="binding site" evidence="1">
    <location>
        <position position="201"/>
    </location>
    <ligand>
        <name>substrate</name>
    </ligand>
</feature>
<feature type="binding site" evidence="1">
    <location>
        <position position="221"/>
    </location>
    <ligand>
        <name>ATP</name>
        <dbReference type="ChEBI" id="CHEBI:30616"/>
    </ligand>
</feature>
<feature type="binding site" evidence="1">
    <location>
        <position position="221"/>
    </location>
    <ligand>
        <name>Mn(2+)</name>
        <dbReference type="ChEBI" id="CHEBI:29035"/>
    </ligand>
</feature>
<feature type="binding site" evidence="1">
    <location>
        <begin position="237"/>
        <end position="245"/>
    </location>
    <ligand>
        <name>ATP</name>
        <dbReference type="ChEBI" id="CHEBI:30616"/>
    </ligand>
</feature>
<feature type="binding site" evidence="1">
    <location>
        <position position="258"/>
    </location>
    <ligand>
        <name>Mn(2+)</name>
        <dbReference type="ChEBI" id="CHEBI:29035"/>
    </ligand>
</feature>
<feature type="binding site" evidence="1">
    <location>
        <position position="287"/>
    </location>
    <ligand>
        <name>ATP</name>
        <dbReference type="ChEBI" id="CHEBI:30616"/>
    </ligand>
</feature>
<feature type="binding site" evidence="1">
    <location>
        <position position="323"/>
    </location>
    <ligand>
        <name>ATP</name>
        <dbReference type="ChEBI" id="CHEBI:30616"/>
    </ligand>
</feature>
<feature type="binding site" evidence="1">
    <location>
        <position position="323"/>
    </location>
    <ligand>
        <name>substrate</name>
    </ligand>
</feature>
<feature type="binding site" evidence="1">
    <location>
        <position position="448"/>
    </location>
    <ligand>
        <name>ATP</name>
        <dbReference type="ChEBI" id="CHEBI:30616"/>
    </ligand>
</feature>
<comment type="function">
    <text evidence="1">Involved in the gluconeogenesis. Catalyzes the conversion of oxaloacetate (OAA) to phosphoenolpyruvate (PEP) through direct phosphoryl transfer between the nucleoside triphosphate and OAA.</text>
</comment>
<comment type="catalytic activity">
    <reaction evidence="1">
        <text>oxaloacetate + ATP = phosphoenolpyruvate + ADP + CO2</text>
        <dbReference type="Rhea" id="RHEA:18617"/>
        <dbReference type="ChEBI" id="CHEBI:16452"/>
        <dbReference type="ChEBI" id="CHEBI:16526"/>
        <dbReference type="ChEBI" id="CHEBI:30616"/>
        <dbReference type="ChEBI" id="CHEBI:58702"/>
        <dbReference type="ChEBI" id="CHEBI:456216"/>
        <dbReference type="EC" id="4.1.1.49"/>
    </reaction>
</comment>
<comment type="cofactor">
    <cofactor evidence="1">
        <name>Mn(2+)</name>
        <dbReference type="ChEBI" id="CHEBI:29035"/>
    </cofactor>
    <text evidence="1">Binds 1 Mn(2+) ion per subunit.</text>
</comment>
<comment type="pathway">
    <text evidence="1">Carbohydrate biosynthesis; gluconeogenesis.</text>
</comment>
<comment type="subcellular location">
    <subcellularLocation>
        <location evidence="1">Cytoplasm</location>
    </subcellularLocation>
</comment>
<comment type="similarity">
    <text evidence="1">Belongs to the phosphoenolpyruvate carboxykinase (ATP) family.</text>
</comment>
<proteinExistence type="inferred from homology"/>
<evidence type="ECO:0000255" key="1">
    <source>
        <dbReference type="HAMAP-Rule" id="MF_00453"/>
    </source>
</evidence>
<name>PCKA_CHRFK</name>
<protein>
    <recommendedName>
        <fullName evidence="1">Phosphoenolpyruvate carboxykinase (ATP)</fullName>
        <shortName evidence="1">PCK</shortName>
        <shortName evidence="1">PEP carboxykinase</shortName>
        <shortName evidence="1">PEPCK</shortName>
        <ecNumber evidence="1">4.1.1.49</ecNumber>
    </recommendedName>
</protein>
<organism>
    <name type="scientific">Christiangramia forsetii (strain DSM 17595 / CGMCC 1.15422 / KT0803)</name>
    <name type="common">Gramella forsetii</name>
    <dbReference type="NCBI Taxonomy" id="411154"/>
    <lineage>
        <taxon>Bacteria</taxon>
        <taxon>Pseudomonadati</taxon>
        <taxon>Bacteroidota</taxon>
        <taxon>Flavobacteriia</taxon>
        <taxon>Flavobacteriales</taxon>
        <taxon>Flavobacteriaceae</taxon>
        <taxon>Christiangramia</taxon>
    </lineage>
</organism>
<dbReference type="EC" id="4.1.1.49" evidence="1"/>
<dbReference type="EMBL" id="CU207366">
    <property type="protein sequence ID" value="CAL65094.1"/>
    <property type="molecule type" value="Genomic_DNA"/>
</dbReference>
<dbReference type="RefSeq" id="WP_011708032.1">
    <property type="nucleotide sequence ID" value="NC_008571.1"/>
</dbReference>
<dbReference type="SMR" id="A0LXJ9"/>
<dbReference type="STRING" id="411154.GFO_0105"/>
<dbReference type="KEGG" id="gfo:GFO_0105"/>
<dbReference type="eggNOG" id="COG1866">
    <property type="taxonomic scope" value="Bacteria"/>
</dbReference>
<dbReference type="HOGENOM" id="CLU_018247_0_1_10"/>
<dbReference type="OrthoDB" id="9806325at2"/>
<dbReference type="UniPathway" id="UPA00138"/>
<dbReference type="Proteomes" id="UP000000755">
    <property type="component" value="Chromosome"/>
</dbReference>
<dbReference type="GO" id="GO:0005829">
    <property type="term" value="C:cytosol"/>
    <property type="evidence" value="ECO:0007669"/>
    <property type="project" value="TreeGrafter"/>
</dbReference>
<dbReference type="GO" id="GO:0005524">
    <property type="term" value="F:ATP binding"/>
    <property type="evidence" value="ECO:0007669"/>
    <property type="project" value="UniProtKB-UniRule"/>
</dbReference>
<dbReference type="GO" id="GO:0046872">
    <property type="term" value="F:metal ion binding"/>
    <property type="evidence" value="ECO:0007669"/>
    <property type="project" value="UniProtKB-KW"/>
</dbReference>
<dbReference type="GO" id="GO:0004612">
    <property type="term" value="F:phosphoenolpyruvate carboxykinase (ATP) activity"/>
    <property type="evidence" value="ECO:0007669"/>
    <property type="project" value="UniProtKB-UniRule"/>
</dbReference>
<dbReference type="GO" id="GO:0006094">
    <property type="term" value="P:gluconeogenesis"/>
    <property type="evidence" value="ECO:0007669"/>
    <property type="project" value="UniProtKB-UniRule"/>
</dbReference>
<dbReference type="CDD" id="cd00484">
    <property type="entry name" value="PEPCK_ATP"/>
    <property type="match status" value="1"/>
</dbReference>
<dbReference type="Gene3D" id="3.90.228.20">
    <property type="match status" value="1"/>
</dbReference>
<dbReference type="Gene3D" id="3.40.449.10">
    <property type="entry name" value="Phosphoenolpyruvate Carboxykinase, domain 1"/>
    <property type="match status" value="1"/>
</dbReference>
<dbReference type="Gene3D" id="2.170.8.10">
    <property type="entry name" value="Phosphoenolpyruvate Carboxykinase, domain 2"/>
    <property type="match status" value="1"/>
</dbReference>
<dbReference type="HAMAP" id="MF_00453">
    <property type="entry name" value="PEPCK_ATP"/>
    <property type="match status" value="1"/>
</dbReference>
<dbReference type="InterPro" id="IPR001272">
    <property type="entry name" value="PEP_carboxykinase_ATP"/>
</dbReference>
<dbReference type="InterPro" id="IPR013035">
    <property type="entry name" value="PEP_carboxykinase_C"/>
</dbReference>
<dbReference type="InterPro" id="IPR008210">
    <property type="entry name" value="PEP_carboxykinase_N"/>
</dbReference>
<dbReference type="NCBIfam" id="TIGR00224">
    <property type="entry name" value="pckA"/>
    <property type="match status" value="1"/>
</dbReference>
<dbReference type="NCBIfam" id="NF006820">
    <property type="entry name" value="PRK09344.1-2"/>
    <property type="match status" value="1"/>
</dbReference>
<dbReference type="NCBIfam" id="NF006821">
    <property type="entry name" value="PRK09344.1-3"/>
    <property type="match status" value="1"/>
</dbReference>
<dbReference type="PANTHER" id="PTHR30031:SF0">
    <property type="entry name" value="PHOSPHOENOLPYRUVATE CARBOXYKINASE (ATP)"/>
    <property type="match status" value="1"/>
</dbReference>
<dbReference type="PANTHER" id="PTHR30031">
    <property type="entry name" value="PHOSPHOENOLPYRUVATE CARBOXYKINASE ATP"/>
    <property type="match status" value="1"/>
</dbReference>
<dbReference type="Pfam" id="PF01293">
    <property type="entry name" value="PEPCK_ATP"/>
    <property type="match status" value="1"/>
</dbReference>
<dbReference type="PIRSF" id="PIRSF006294">
    <property type="entry name" value="PEP_crbxkin"/>
    <property type="match status" value="1"/>
</dbReference>
<dbReference type="SUPFAM" id="SSF68923">
    <property type="entry name" value="PEP carboxykinase N-terminal domain"/>
    <property type="match status" value="1"/>
</dbReference>
<dbReference type="SUPFAM" id="SSF53795">
    <property type="entry name" value="PEP carboxykinase-like"/>
    <property type="match status" value="1"/>
</dbReference>
<reference key="1">
    <citation type="journal article" date="2006" name="Environ. Microbiol.">
        <title>Whole genome analysis of the marine Bacteroidetes'Gramella forsetii' reveals adaptations to degradation of polymeric organic matter.</title>
        <authorList>
            <person name="Bauer M."/>
            <person name="Kube M."/>
            <person name="Teeling H."/>
            <person name="Richter M."/>
            <person name="Lombardot T."/>
            <person name="Allers E."/>
            <person name="Wuerdemann C.A."/>
            <person name="Quast C."/>
            <person name="Kuhl H."/>
            <person name="Knaust F."/>
            <person name="Woebken D."/>
            <person name="Bischof K."/>
            <person name="Mussmann M."/>
            <person name="Choudhuri J.V."/>
            <person name="Meyer F."/>
            <person name="Reinhardt R."/>
            <person name="Amann R.I."/>
            <person name="Gloeckner F.O."/>
        </authorList>
    </citation>
    <scope>NUCLEOTIDE SEQUENCE [LARGE SCALE GENOMIC DNA]</scope>
    <source>
        <strain>DSM 17595 / CGMCC 1.15422 / KT0803</strain>
    </source>
</reference>